<gene>
    <name type="primary">insE7</name>
    <name type="synonym">ybfA</name>
    <name type="ordered locus">ECOK12F018</name>
</gene>
<geneLocation type="plasmid">
    <name>F</name>
</geneLocation>
<keyword id="KW-0233">DNA recombination</keyword>
<keyword id="KW-0238">DNA-binding</keyword>
<keyword id="KW-0614">Plasmid</keyword>
<keyword id="KW-0814">Transposable element</keyword>
<keyword id="KW-0815">Transposition</keyword>
<accession>P0CF72</accession>
<accession>P0ADH3</accession>
<accession>P77681</accession>
<accession>Q2MCC3</accession>
<accession>Q9S136</accession>
<comment type="function">
    <text>Involved in the transposition of the insertion sequence IS3.</text>
</comment>
<comment type="similarity">
    <text evidence="2">Belongs to the transposase 8 family.</text>
</comment>
<evidence type="ECO:0000256" key="1">
    <source>
        <dbReference type="SAM" id="MobiDB-lite"/>
    </source>
</evidence>
<evidence type="ECO:0000305" key="2"/>
<dbReference type="EMBL" id="AP001918">
    <property type="protein sequence ID" value="BAA97886.1"/>
    <property type="molecule type" value="Genomic_DNA"/>
</dbReference>
<dbReference type="RefSeq" id="NP_061380.1">
    <property type="nucleotide sequence ID" value="NC_002483.1"/>
</dbReference>
<dbReference type="RefSeq" id="NP_061395.1">
    <property type="nucleotide sequence ID" value="NC_002483.1"/>
</dbReference>
<dbReference type="SMR" id="P0CF72"/>
<dbReference type="KEGG" id="ecoc:C3026_01465"/>
<dbReference type="KEGG" id="ecoc:C3026_02655"/>
<dbReference type="KEGG" id="ecoc:C3026_06255"/>
<dbReference type="KEGG" id="ecoc:C3026_11725"/>
<dbReference type="KEGG" id="ecoc:C3026_24095"/>
<dbReference type="KEGG" id="ecoc:C3026_24185"/>
<dbReference type="KEGG" id="ecoc:C3026_24640"/>
<dbReference type="PATRIC" id="fig|83333.103.peg.1057"/>
<dbReference type="OMA" id="LHESQIY"/>
<dbReference type="PhylomeDB" id="P0CF72"/>
<dbReference type="PRO" id="PR:P0CF72"/>
<dbReference type="GO" id="GO:0003677">
    <property type="term" value="F:DNA binding"/>
    <property type="evidence" value="ECO:0007669"/>
    <property type="project" value="UniProtKB-KW"/>
</dbReference>
<dbReference type="GO" id="GO:0004803">
    <property type="term" value="F:transposase activity"/>
    <property type="evidence" value="ECO:0007669"/>
    <property type="project" value="InterPro"/>
</dbReference>
<dbReference type="GO" id="GO:0006313">
    <property type="term" value="P:DNA transposition"/>
    <property type="evidence" value="ECO:0007669"/>
    <property type="project" value="InterPro"/>
</dbReference>
<dbReference type="InterPro" id="IPR009057">
    <property type="entry name" value="Homeodomain-like_sf"/>
</dbReference>
<dbReference type="InterPro" id="IPR051839">
    <property type="entry name" value="RD_transcriptional_regulator"/>
</dbReference>
<dbReference type="InterPro" id="IPR002514">
    <property type="entry name" value="Transposase_8"/>
</dbReference>
<dbReference type="PANTHER" id="PTHR33215">
    <property type="entry name" value="PROTEIN DISTAL ANTENNA"/>
    <property type="match status" value="1"/>
</dbReference>
<dbReference type="PANTHER" id="PTHR33215:SF6">
    <property type="entry name" value="TRANSPOSASE INSE FOR INSERTION SEQUENCE IS3A-RELATED"/>
    <property type="match status" value="1"/>
</dbReference>
<dbReference type="Pfam" id="PF01527">
    <property type="entry name" value="HTH_Tnp_1"/>
    <property type="match status" value="1"/>
</dbReference>
<dbReference type="SUPFAM" id="SSF46689">
    <property type="entry name" value="Homeodomain-like"/>
    <property type="match status" value="1"/>
</dbReference>
<name>INSE7_ECOLI</name>
<proteinExistence type="inferred from homology"/>
<sequence>MTKTVSTSKKPRKQHSPEFRSEALKLAERIGVTAAARELSLYESQLYNWRSKQQNQQTSSERELEMSTEIARLKRQLAERDEELAILQKAATYFAKRLK</sequence>
<organism>
    <name type="scientific">Escherichia coli (strain K12)</name>
    <dbReference type="NCBI Taxonomy" id="83333"/>
    <lineage>
        <taxon>Bacteria</taxon>
        <taxon>Pseudomonadati</taxon>
        <taxon>Pseudomonadota</taxon>
        <taxon>Gammaproteobacteria</taxon>
        <taxon>Enterobacterales</taxon>
        <taxon>Enterobacteriaceae</taxon>
        <taxon>Escherichia</taxon>
    </lineage>
</organism>
<reference key="1">
    <citation type="submission" date="2000-04" db="EMBL/GenBank/DDBJ databases">
        <title>Complete nucleotide sequence of the F plasmid: its implications for organization and diversification of plasmid genomes.</title>
        <authorList>
            <person name="Shimizu H."/>
            <person name="Saitoh Y."/>
            <person name="Suda Y."/>
            <person name="Uehara K."/>
            <person name="Sampei G."/>
            <person name="Mizobuchi K."/>
        </authorList>
    </citation>
    <scope>NUCLEOTIDE SEQUENCE [LARGE SCALE GENOMIC DNA]</scope>
    <source>
        <strain>K12 / CR63</strain>
        <plasmid>F</plasmid>
    </source>
</reference>
<feature type="chain" id="PRO_0000393748" description="Transposase InsE for insertion sequence IS3fB">
    <location>
        <begin position="1"/>
        <end position="99"/>
    </location>
</feature>
<feature type="region of interest" description="Disordered" evidence="1">
    <location>
        <begin position="1"/>
        <end position="21"/>
    </location>
</feature>
<protein>
    <recommendedName>
        <fullName>Transposase InsE for insertion sequence IS3fB</fullName>
    </recommendedName>
</protein>